<keyword id="KW-0548">Nucleotidyltransferase</keyword>
<keyword id="KW-1185">Reference proteome</keyword>
<keyword id="KW-0694">RNA-binding</keyword>
<keyword id="KW-0698">rRNA processing</keyword>
<keyword id="KW-0808">Transferase</keyword>
<keyword id="KW-0819">tRNA processing</keyword>
<keyword id="KW-0820">tRNA-binding</keyword>
<dbReference type="EC" id="2.7.7.56" evidence="1"/>
<dbReference type="EMBL" id="AE016877">
    <property type="protein sequence ID" value="AAP11405.1"/>
    <property type="molecule type" value="Genomic_DNA"/>
</dbReference>
<dbReference type="RefSeq" id="NP_834204.1">
    <property type="nucleotide sequence ID" value="NC_004722.1"/>
</dbReference>
<dbReference type="RefSeq" id="WP_001261765.1">
    <property type="nucleotide sequence ID" value="NZ_CP138336.1"/>
</dbReference>
<dbReference type="SMR" id="Q817P3"/>
<dbReference type="STRING" id="226900.BC_4494"/>
<dbReference type="GeneID" id="93006619"/>
<dbReference type="KEGG" id="bce:BC4494"/>
<dbReference type="PATRIC" id="fig|226900.8.peg.4647"/>
<dbReference type="HOGENOM" id="CLU_050858_0_0_9"/>
<dbReference type="OrthoDB" id="9802265at2"/>
<dbReference type="Proteomes" id="UP000001417">
    <property type="component" value="Chromosome"/>
</dbReference>
<dbReference type="GO" id="GO:0000175">
    <property type="term" value="F:3'-5'-RNA exonuclease activity"/>
    <property type="evidence" value="ECO:0007669"/>
    <property type="project" value="UniProtKB-UniRule"/>
</dbReference>
<dbReference type="GO" id="GO:0003723">
    <property type="term" value="F:RNA binding"/>
    <property type="evidence" value="ECO:0000318"/>
    <property type="project" value="GO_Central"/>
</dbReference>
<dbReference type="GO" id="GO:0000049">
    <property type="term" value="F:tRNA binding"/>
    <property type="evidence" value="ECO:0007669"/>
    <property type="project" value="UniProtKB-UniRule"/>
</dbReference>
<dbReference type="GO" id="GO:0009022">
    <property type="term" value="F:tRNA nucleotidyltransferase activity"/>
    <property type="evidence" value="ECO:0007669"/>
    <property type="project" value="UniProtKB-UniRule"/>
</dbReference>
<dbReference type="GO" id="GO:0016075">
    <property type="term" value="P:rRNA catabolic process"/>
    <property type="evidence" value="ECO:0000318"/>
    <property type="project" value="GO_Central"/>
</dbReference>
<dbReference type="GO" id="GO:0006364">
    <property type="term" value="P:rRNA processing"/>
    <property type="evidence" value="ECO:0007669"/>
    <property type="project" value="UniProtKB-KW"/>
</dbReference>
<dbReference type="GO" id="GO:0008033">
    <property type="term" value="P:tRNA processing"/>
    <property type="evidence" value="ECO:0007669"/>
    <property type="project" value="UniProtKB-UniRule"/>
</dbReference>
<dbReference type="CDD" id="cd11362">
    <property type="entry name" value="RNase_PH_bact"/>
    <property type="match status" value="1"/>
</dbReference>
<dbReference type="FunFam" id="3.30.230.70:FF:000003">
    <property type="entry name" value="Ribonuclease PH"/>
    <property type="match status" value="1"/>
</dbReference>
<dbReference type="Gene3D" id="3.30.230.70">
    <property type="entry name" value="GHMP Kinase, N-terminal domain"/>
    <property type="match status" value="1"/>
</dbReference>
<dbReference type="HAMAP" id="MF_00564">
    <property type="entry name" value="RNase_PH"/>
    <property type="match status" value="1"/>
</dbReference>
<dbReference type="InterPro" id="IPR001247">
    <property type="entry name" value="ExoRNase_PH_dom1"/>
</dbReference>
<dbReference type="InterPro" id="IPR015847">
    <property type="entry name" value="ExoRNase_PH_dom2"/>
</dbReference>
<dbReference type="InterPro" id="IPR036345">
    <property type="entry name" value="ExoRNase_PH_dom2_sf"/>
</dbReference>
<dbReference type="InterPro" id="IPR027408">
    <property type="entry name" value="PNPase/RNase_PH_dom_sf"/>
</dbReference>
<dbReference type="InterPro" id="IPR020568">
    <property type="entry name" value="Ribosomal_Su5_D2-typ_SF"/>
</dbReference>
<dbReference type="InterPro" id="IPR050080">
    <property type="entry name" value="RNase_PH"/>
</dbReference>
<dbReference type="InterPro" id="IPR002381">
    <property type="entry name" value="RNase_PH_bac-type"/>
</dbReference>
<dbReference type="InterPro" id="IPR018336">
    <property type="entry name" value="RNase_PH_CS"/>
</dbReference>
<dbReference type="NCBIfam" id="TIGR01966">
    <property type="entry name" value="RNasePH"/>
    <property type="match status" value="1"/>
</dbReference>
<dbReference type="PANTHER" id="PTHR11953">
    <property type="entry name" value="EXOSOME COMPLEX COMPONENT"/>
    <property type="match status" value="1"/>
</dbReference>
<dbReference type="PANTHER" id="PTHR11953:SF0">
    <property type="entry name" value="EXOSOME COMPLEX COMPONENT RRP41"/>
    <property type="match status" value="1"/>
</dbReference>
<dbReference type="Pfam" id="PF01138">
    <property type="entry name" value="RNase_PH"/>
    <property type="match status" value="1"/>
</dbReference>
<dbReference type="Pfam" id="PF03725">
    <property type="entry name" value="RNase_PH_C"/>
    <property type="match status" value="1"/>
</dbReference>
<dbReference type="SUPFAM" id="SSF55666">
    <property type="entry name" value="Ribonuclease PH domain 2-like"/>
    <property type="match status" value="1"/>
</dbReference>
<dbReference type="SUPFAM" id="SSF54211">
    <property type="entry name" value="Ribosomal protein S5 domain 2-like"/>
    <property type="match status" value="1"/>
</dbReference>
<dbReference type="PROSITE" id="PS01277">
    <property type="entry name" value="RIBONUCLEASE_PH"/>
    <property type="match status" value="1"/>
</dbReference>
<gene>
    <name evidence="1" type="primary">rph</name>
    <name type="ordered locus">BC_4494</name>
</gene>
<sequence length="245" mass="27001">MRVDGREKTELRHIHIHTNYLKHPEGSVLIEVGDTKVICSATIEERVPPFMRGEGKGWVTAEYAMIPRATEQRTIRESSKGKVTGRTMEIQRLIGRALRAVVDLEALGERTVWIDCDVIQADGGTRTASITGAYVAMVLAFEKLLQAEKVSKIPVKDYLAATSVGIVEEQGVVLDLNYAEDSKADVDMNVIMTGKGQFVEVQGTGEEATFSRAQLNELLDAAEQGIFQLIDMQKEALGDIVSHIE</sequence>
<accession>Q817P3</accession>
<proteinExistence type="inferred from homology"/>
<protein>
    <recommendedName>
        <fullName evidence="1">Ribonuclease PH</fullName>
        <shortName evidence="1">RNase PH</shortName>
        <ecNumber evidence="1">2.7.7.56</ecNumber>
    </recommendedName>
    <alternativeName>
        <fullName evidence="1">tRNA nucleotidyltransferase</fullName>
    </alternativeName>
</protein>
<name>RNPH_BACCR</name>
<reference key="1">
    <citation type="journal article" date="2003" name="Nature">
        <title>Genome sequence of Bacillus cereus and comparative analysis with Bacillus anthracis.</title>
        <authorList>
            <person name="Ivanova N."/>
            <person name="Sorokin A."/>
            <person name="Anderson I."/>
            <person name="Galleron N."/>
            <person name="Candelon B."/>
            <person name="Kapatral V."/>
            <person name="Bhattacharyya A."/>
            <person name="Reznik G."/>
            <person name="Mikhailova N."/>
            <person name="Lapidus A."/>
            <person name="Chu L."/>
            <person name="Mazur M."/>
            <person name="Goltsman E."/>
            <person name="Larsen N."/>
            <person name="D'Souza M."/>
            <person name="Walunas T."/>
            <person name="Grechkin Y."/>
            <person name="Pusch G."/>
            <person name="Haselkorn R."/>
            <person name="Fonstein M."/>
            <person name="Ehrlich S.D."/>
            <person name="Overbeek R."/>
            <person name="Kyrpides N.C."/>
        </authorList>
    </citation>
    <scope>NUCLEOTIDE SEQUENCE [LARGE SCALE GENOMIC DNA]</scope>
    <source>
        <strain>ATCC 14579 / DSM 31 / CCUG 7414 / JCM 2152 / NBRC 15305 / NCIMB 9373 / NCTC 2599 / NRRL B-3711</strain>
    </source>
</reference>
<organism>
    <name type="scientific">Bacillus cereus (strain ATCC 14579 / DSM 31 / CCUG 7414 / JCM 2152 / NBRC 15305 / NCIMB 9373 / NCTC 2599 / NRRL B-3711)</name>
    <dbReference type="NCBI Taxonomy" id="226900"/>
    <lineage>
        <taxon>Bacteria</taxon>
        <taxon>Bacillati</taxon>
        <taxon>Bacillota</taxon>
        <taxon>Bacilli</taxon>
        <taxon>Bacillales</taxon>
        <taxon>Bacillaceae</taxon>
        <taxon>Bacillus</taxon>
        <taxon>Bacillus cereus group</taxon>
    </lineage>
</organism>
<evidence type="ECO:0000255" key="1">
    <source>
        <dbReference type="HAMAP-Rule" id="MF_00564"/>
    </source>
</evidence>
<comment type="function">
    <text evidence="1">Phosphorolytic 3'-5' exoribonuclease that plays an important role in tRNA 3'-end maturation. Removes nucleotide residues following the 3'-CCA terminus of tRNAs; can also add nucleotides to the ends of RNA molecules by using nucleoside diphosphates as substrates, but this may not be physiologically important. Probably plays a role in initiation of 16S rRNA degradation (leading to ribosome degradation) during starvation.</text>
</comment>
<comment type="catalytic activity">
    <reaction evidence="1">
        <text>tRNA(n+1) + phosphate = tRNA(n) + a ribonucleoside 5'-diphosphate</text>
        <dbReference type="Rhea" id="RHEA:10628"/>
        <dbReference type="Rhea" id="RHEA-COMP:17343"/>
        <dbReference type="Rhea" id="RHEA-COMP:17344"/>
        <dbReference type="ChEBI" id="CHEBI:43474"/>
        <dbReference type="ChEBI" id="CHEBI:57930"/>
        <dbReference type="ChEBI" id="CHEBI:173114"/>
        <dbReference type="EC" id="2.7.7.56"/>
    </reaction>
</comment>
<comment type="subunit">
    <text evidence="1">Homohexameric ring arranged as a trimer of dimers.</text>
</comment>
<comment type="similarity">
    <text evidence="1">Belongs to the RNase PH family.</text>
</comment>
<feature type="chain" id="PRO_0000139864" description="Ribonuclease PH">
    <location>
        <begin position="1"/>
        <end position="245"/>
    </location>
</feature>
<feature type="binding site" evidence="1">
    <location>
        <position position="86"/>
    </location>
    <ligand>
        <name>phosphate</name>
        <dbReference type="ChEBI" id="CHEBI:43474"/>
        <note>substrate</note>
    </ligand>
</feature>
<feature type="binding site" evidence="1">
    <location>
        <begin position="124"/>
        <end position="126"/>
    </location>
    <ligand>
        <name>phosphate</name>
        <dbReference type="ChEBI" id="CHEBI:43474"/>
        <note>substrate</note>
    </ligand>
</feature>